<proteinExistence type="predicted"/>
<reference key="1">
    <citation type="journal article" date="1997" name="Nature">
        <title>The complete genome sequence of the hyperthermophilic, sulphate-reducing archaeon Archaeoglobus fulgidus.</title>
        <authorList>
            <person name="Klenk H.-P."/>
            <person name="Clayton R.A."/>
            <person name="Tomb J.-F."/>
            <person name="White O."/>
            <person name="Nelson K.E."/>
            <person name="Ketchum K.A."/>
            <person name="Dodson R.J."/>
            <person name="Gwinn M.L."/>
            <person name="Hickey E.K."/>
            <person name="Peterson J.D."/>
            <person name="Richardson D.L."/>
            <person name="Kerlavage A.R."/>
            <person name="Graham D.E."/>
            <person name="Kyrpides N.C."/>
            <person name="Fleischmann R.D."/>
            <person name="Quackenbush J."/>
            <person name="Lee N.H."/>
            <person name="Sutton G.G."/>
            <person name="Gill S.R."/>
            <person name="Kirkness E.F."/>
            <person name="Dougherty B.A."/>
            <person name="McKenney K."/>
            <person name="Adams M.D."/>
            <person name="Loftus B.J."/>
            <person name="Peterson S.N."/>
            <person name="Reich C.I."/>
            <person name="McNeil L.K."/>
            <person name="Badger J.H."/>
            <person name="Glodek A."/>
            <person name="Zhou L."/>
            <person name="Overbeek R."/>
            <person name="Gocayne J.D."/>
            <person name="Weidman J.F."/>
            <person name="McDonald L.A."/>
            <person name="Utterback T.R."/>
            <person name="Cotton M.D."/>
            <person name="Spriggs T."/>
            <person name="Artiach P."/>
            <person name="Kaine B.P."/>
            <person name="Sykes S.M."/>
            <person name="Sadow P.W."/>
            <person name="D'Andrea K.P."/>
            <person name="Bowman C."/>
            <person name="Fujii C."/>
            <person name="Garland S.A."/>
            <person name="Mason T.M."/>
            <person name="Olsen G.J."/>
            <person name="Fraser C.M."/>
            <person name="Smith H.O."/>
            <person name="Woese C.R."/>
            <person name="Venter J.C."/>
        </authorList>
    </citation>
    <scope>NUCLEOTIDE SEQUENCE [LARGE SCALE GENOMIC DNA]</scope>
    <source>
        <strain>ATCC 49558 / DSM 4304 / JCM 9628 / NBRC 100126 / VC-16</strain>
    </source>
</reference>
<protein>
    <recommendedName>
        <fullName>Uncharacterized protein AF_2362</fullName>
    </recommendedName>
</protein>
<keyword id="KW-1185">Reference proteome</keyword>
<feature type="chain" id="PRO_0000128147" description="Uncharacterized protein AF_2362">
    <location>
        <begin position="1"/>
        <end position="161"/>
    </location>
</feature>
<sequence>MNLSEFEREVKELFDADLVERAKNLKKSGNIFNPIFYIFFTRIVELSAIINDMVLPNRYELEELFRTRKDFLQIDYGTIGETIRRAWLYERERGVEFTFSNSVEDMLYLLYRMGKLQGKLDRIIMKYAEWEKNKLAELYFTILKILLELEDRINREIREEA</sequence>
<dbReference type="EMBL" id="AE000782">
    <property type="protein sequence ID" value="AAB91308.1"/>
    <property type="molecule type" value="Genomic_DNA"/>
</dbReference>
<dbReference type="PIR" id="B69545">
    <property type="entry name" value="B69545"/>
</dbReference>
<dbReference type="RefSeq" id="WP_010879848.1">
    <property type="nucleotide sequence ID" value="NC_000917.1"/>
</dbReference>
<dbReference type="PaxDb" id="224325-AF_2362"/>
<dbReference type="EnsemblBacteria" id="AAB91308">
    <property type="protein sequence ID" value="AAB91308"/>
    <property type="gene ID" value="AF_2362"/>
</dbReference>
<dbReference type="KEGG" id="afu:AF_2362"/>
<dbReference type="eggNOG" id="arCOG10979">
    <property type="taxonomic scope" value="Archaea"/>
</dbReference>
<dbReference type="HOGENOM" id="CLU_1639873_0_0_2"/>
<dbReference type="OrthoDB" id="51633at2157"/>
<dbReference type="Proteomes" id="UP000002199">
    <property type="component" value="Chromosome"/>
</dbReference>
<gene>
    <name type="ordered locus">AF_2362</name>
</gene>
<accession>O30308</accession>
<name>Y2362_ARCFU</name>
<organism>
    <name type="scientific">Archaeoglobus fulgidus (strain ATCC 49558 / DSM 4304 / JCM 9628 / NBRC 100126 / VC-16)</name>
    <dbReference type="NCBI Taxonomy" id="224325"/>
    <lineage>
        <taxon>Archaea</taxon>
        <taxon>Methanobacteriati</taxon>
        <taxon>Methanobacteriota</taxon>
        <taxon>Archaeoglobi</taxon>
        <taxon>Archaeoglobales</taxon>
        <taxon>Archaeoglobaceae</taxon>
        <taxon>Archaeoglobus</taxon>
    </lineage>
</organism>